<dbReference type="EMBL" id="Y09704">
    <property type="protein sequence ID" value="CAA70875.1"/>
    <property type="molecule type" value="Genomic_DNA"/>
</dbReference>
<dbReference type="EMBL" id="AY754570">
    <property type="protein sequence ID" value="AAX13145.1"/>
    <property type="molecule type" value="Genomic_DNA"/>
</dbReference>
<dbReference type="SMR" id="P84324"/>
<dbReference type="GO" id="GO:0022625">
    <property type="term" value="C:cytosolic large ribosomal subunit"/>
    <property type="evidence" value="ECO:0007669"/>
    <property type="project" value="TreeGrafter"/>
</dbReference>
<dbReference type="GO" id="GO:0003735">
    <property type="term" value="F:structural constituent of ribosome"/>
    <property type="evidence" value="ECO:0007669"/>
    <property type="project" value="InterPro"/>
</dbReference>
<dbReference type="GO" id="GO:0006412">
    <property type="term" value="P:translation"/>
    <property type="evidence" value="ECO:0007669"/>
    <property type="project" value="InterPro"/>
</dbReference>
<dbReference type="CDD" id="cd00513">
    <property type="entry name" value="Ribosomal_L32_L32e"/>
    <property type="match status" value="1"/>
</dbReference>
<dbReference type="InterPro" id="IPR001515">
    <property type="entry name" value="Ribosomal_eL32"/>
</dbReference>
<dbReference type="InterPro" id="IPR018263">
    <property type="entry name" value="Ribosomal_eL32_CS"/>
</dbReference>
<dbReference type="InterPro" id="IPR036351">
    <property type="entry name" value="Ribosomal_eL32_sf"/>
</dbReference>
<dbReference type="PANTHER" id="PTHR23413">
    <property type="entry name" value="60S RIBOSOMAL PROTEIN L32 AND DNA-DIRECTED RNA POLYMERASE II, SUBUNIT N"/>
    <property type="match status" value="1"/>
</dbReference>
<dbReference type="PANTHER" id="PTHR23413:SF1">
    <property type="entry name" value="RIBOSOMAL PROTEIN L32"/>
    <property type="match status" value="1"/>
</dbReference>
<dbReference type="Pfam" id="PF01655">
    <property type="entry name" value="Ribosomal_L32e"/>
    <property type="match status" value="1"/>
</dbReference>
<dbReference type="SMART" id="SM01393">
    <property type="entry name" value="Ribosomal_L32e"/>
    <property type="match status" value="1"/>
</dbReference>
<dbReference type="SUPFAM" id="SSF52042">
    <property type="entry name" value="Ribosomal protein L32e"/>
    <property type="match status" value="1"/>
</dbReference>
<dbReference type="PROSITE" id="PS00580">
    <property type="entry name" value="RIBOSOMAL_L32E"/>
    <property type="match status" value="1"/>
</dbReference>
<reference key="1">
    <citation type="journal article" date="1998" name="Mol. Phylogenet. Evol.">
        <title>Molecular and chromosomal phylogeny in the obscura group of Drosophila inferred from sequences of the rp49 gene region.</title>
        <authorList>
            <person name="Ramos-Onsins S."/>
            <person name="Segarra C."/>
            <person name="Rozas J."/>
            <person name="Aguade M."/>
        </authorList>
    </citation>
    <scope>NUCLEOTIDE SEQUENCE [GENOMIC DNA]</scope>
</reference>
<reference key="2">
    <citation type="journal article" date="2005" name="Genetics">
        <title>Patterns of selection on synonymous and nonsynonymous variants in Drosophila miranda.</title>
        <authorList>
            <person name="Bartolome C."/>
            <person name="Maside X."/>
            <person name="Yi S."/>
            <person name="Grant A.L."/>
            <person name="Charlesworth B."/>
        </authorList>
    </citation>
    <scope>NUCLEOTIDE SEQUENCE [GENOMIC DNA]</scope>
</reference>
<organism>
    <name type="scientific">Drosophila affinis</name>
    <name type="common">Fruit fly</name>
    <dbReference type="NCBI Taxonomy" id="7246"/>
    <lineage>
        <taxon>Eukaryota</taxon>
        <taxon>Metazoa</taxon>
        <taxon>Ecdysozoa</taxon>
        <taxon>Arthropoda</taxon>
        <taxon>Hexapoda</taxon>
        <taxon>Insecta</taxon>
        <taxon>Pterygota</taxon>
        <taxon>Neoptera</taxon>
        <taxon>Endopterygota</taxon>
        <taxon>Diptera</taxon>
        <taxon>Brachycera</taxon>
        <taxon>Muscomorpha</taxon>
        <taxon>Ephydroidea</taxon>
        <taxon>Drosophilidae</taxon>
        <taxon>Drosophila</taxon>
        <taxon>Sophophora</taxon>
    </lineage>
</organism>
<sequence length="134" mass="16062">MTIRPAYRPKIIKKRTKHFIRHQSDRYAKLSHKWRKPKGIDNRVRRRFKGQYLMPNIGYGSNKRTRHMLPTGFKKFLVHNVRELEVLLMQNRVYCGEIAHAVSSKKRKEIVERAKQLSIRLTNPNGRLRSQENE</sequence>
<name>RL32_DROAI</name>
<evidence type="ECO:0000305" key="1"/>
<gene>
    <name type="primary">RpL32</name>
    <name type="synonym">rp49</name>
</gene>
<protein>
    <recommendedName>
        <fullName evidence="1">Large ribosomal subunit protein eL32</fullName>
    </recommendedName>
    <alternativeName>
        <fullName>60S ribosomal protein L32</fullName>
    </alternativeName>
    <alternativeName>
        <fullName>Ribosomal protein 49</fullName>
    </alternativeName>
</protein>
<proteinExistence type="inferred from homology"/>
<accession>P84324</accession>
<accession>P46615</accession>
<accession>Q56RD7</accession>
<feature type="chain" id="PRO_0000131123" description="Large ribosomal subunit protein eL32">
    <location>
        <begin position="1"/>
        <end position="134"/>
    </location>
</feature>
<keyword id="KW-0687">Ribonucleoprotein</keyword>
<keyword id="KW-0689">Ribosomal protein</keyword>
<comment type="similarity">
    <text evidence="1">Belongs to the eukaryotic ribosomal protein eL32 family.</text>
</comment>